<feature type="chain" id="PRO_0000156265" description="Phosphopantetheine adenylyltransferase">
    <location>
        <begin position="1"/>
        <end position="169"/>
    </location>
</feature>
<feature type="binding site" evidence="1">
    <location>
        <begin position="10"/>
        <end position="11"/>
    </location>
    <ligand>
        <name>ATP</name>
        <dbReference type="ChEBI" id="CHEBI:30616"/>
    </ligand>
</feature>
<feature type="binding site" evidence="1">
    <location>
        <position position="10"/>
    </location>
    <ligand>
        <name>substrate</name>
    </ligand>
</feature>
<feature type="binding site" evidence="1">
    <location>
        <position position="18"/>
    </location>
    <ligand>
        <name>ATP</name>
        <dbReference type="ChEBI" id="CHEBI:30616"/>
    </ligand>
</feature>
<feature type="binding site" evidence="1">
    <location>
        <position position="42"/>
    </location>
    <ligand>
        <name>substrate</name>
    </ligand>
</feature>
<feature type="binding site" evidence="1">
    <location>
        <position position="79"/>
    </location>
    <ligand>
        <name>substrate</name>
    </ligand>
</feature>
<feature type="binding site" evidence="1">
    <location>
        <position position="93"/>
    </location>
    <ligand>
        <name>substrate</name>
    </ligand>
</feature>
<feature type="binding site" evidence="1">
    <location>
        <begin position="94"/>
        <end position="96"/>
    </location>
    <ligand>
        <name>ATP</name>
        <dbReference type="ChEBI" id="CHEBI:30616"/>
    </ligand>
</feature>
<feature type="binding site" evidence="1">
    <location>
        <position position="104"/>
    </location>
    <ligand>
        <name>ATP</name>
        <dbReference type="ChEBI" id="CHEBI:30616"/>
    </ligand>
</feature>
<feature type="binding site" evidence="1">
    <location>
        <begin position="129"/>
        <end position="135"/>
    </location>
    <ligand>
        <name>ATP</name>
        <dbReference type="ChEBI" id="CHEBI:30616"/>
    </ligand>
</feature>
<feature type="site" description="Transition state stabilizer" evidence="1">
    <location>
        <position position="18"/>
    </location>
</feature>
<keyword id="KW-0067">ATP-binding</keyword>
<keyword id="KW-0173">Coenzyme A biosynthesis</keyword>
<keyword id="KW-0963">Cytoplasm</keyword>
<keyword id="KW-0460">Magnesium</keyword>
<keyword id="KW-0547">Nucleotide-binding</keyword>
<keyword id="KW-0548">Nucleotidyltransferase</keyword>
<keyword id="KW-0808">Transferase</keyword>
<proteinExistence type="inferred from homology"/>
<gene>
    <name evidence="1" type="primary">coaD</name>
    <name type="ordered locus">RPA2601</name>
</gene>
<dbReference type="EC" id="2.7.7.3" evidence="1"/>
<dbReference type="EMBL" id="BX572601">
    <property type="protein sequence ID" value="CAE28042.1"/>
    <property type="molecule type" value="Genomic_DNA"/>
</dbReference>
<dbReference type="RefSeq" id="WP_011158151.1">
    <property type="nucleotide sequence ID" value="NZ_CP116810.1"/>
</dbReference>
<dbReference type="SMR" id="Q6N6L4"/>
<dbReference type="STRING" id="258594.RPA2601"/>
<dbReference type="GeneID" id="66893670"/>
<dbReference type="eggNOG" id="COG0669">
    <property type="taxonomic scope" value="Bacteria"/>
</dbReference>
<dbReference type="HOGENOM" id="CLU_100149_0_1_5"/>
<dbReference type="PhylomeDB" id="Q6N6L4"/>
<dbReference type="UniPathway" id="UPA00241">
    <property type="reaction ID" value="UER00355"/>
</dbReference>
<dbReference type="GO" id="GO:0005737">
    <property type="term" value="C:cytoplasm"/>
    <property type="evidence" value="ECO:0007669"/>
    <property type="project" value="UniProtKB-SubCell"/>
</dbReference>
<dbReference type="GO" id="GO:0005524">
    <property type="term" value="F:ATP binding"/>
    <property type="evidence" value="ECO:0007669"/>
    <property type="project" value="UniProtKB-KW"/>
</dbReference>
<dbReference type="GO" id="GO:0004595">
    <property type="term" value="F:pantetheine-phosphate adenylyltransferase activity"/>
    <property type="evidence" value="ECO:0007669"/>
    <property type="project" value="UniProtKB-UniRule"/>
</dbReference>
<dbReference type="GO" id="GO:0015937">
    <property type="term" value="P:coenzyme A biosynthetic process"/>
    <property type="evidence" value="ECO:0007669"/>
    <property type="project" value="UniProtKB-UniRule"/>
</dbReference>
<dbReference type="CDD" id="cd02163">
    <property type="entry name" value="PPAT"/>
    <property type="match status" value="1"/>
</dbReference>
<dbReference type="Gene3D" id="3.40.50.620">
    <property type="entry name" value="HUPs"/>
    <property type="match status" value="1"/>
</dbReference>
<dbReference type="HAMAP" id="MF_00151">
    <property type="entry name" value="PPAT_bact"/>
    <property type="match status" value="1"/>
</dbReference>
<dbReference type="InterPro" id="IPR004821">
    <property type="entry name" value="Cyt_trans-like"/>
</dbReference>
<dbReference type="InterPro" id="IPR001980">
    <property type="entry name" value="PPAT"/>
</dbReference>
<dbReference type="InterPro" id="IPR014729">
    <property type="entry name" value="Rossmann-like_a/b/a_fold"/>
</dbReference>
<dbReference type="NCBIfam" id="TIGR01510">
    <property type="entry name" value="coaD_prev_kdtB"/>
    <property type="match status" value="1"/>
</dbReference>
<dbReference type="NCBIfam" id="TIGR00125">
    <property type="entry name" value="cyt_tran_rel"/>
    <property type="match status" value="1"/>
</dbReference>
<dbReference type="PANTHER" id="PTHR21342">
    <property type="entry name" value="PHOSPHOPANTETHEINE ADENYLYLTRANSFERASE"/>
    <property type="match status" value="1"/>
</dbReference>
<dbReference type="PANTHER" id="PTHR21342:SF1">
    <property type="entry name" value="PHOSPHOPANTETHEINE ADENYLYLTRANSFERASE"/>
    <property type="match status" value="1"/>
</dbReference>
<dbReference type="Pfam" id="PF01467">
    <property type="entry name" value="CTP_transf_like"/>
    <property type="match status" value="1"/>
</dbReference>
<dbReference type="PRINTS" id="PR01020">
    <property type="entry name" value="LPSBIOSNTHSS"/>
</dbReference>
<dbReference type="SUPFAM" id="SSF52374">
    <property type="entry name" value="Nucleotidylyl transferase"/>
    <property type="match status" value="1"/>
</dbReference>
<name>COAD_RHOPA</name>
<organism>
    <name type="scientific">Rhodopseudomonas palustris (strain ATCC BAA-98 / CGA009)</name>
    <dbReference type="NCBI Taxonomy" id="258594"/>
    <lineage>
        <taxon>Bacteria</taxon>
        <taxon>Pseudomonadati</taxon>
        <taxon>Pseudomonadota</taxon>
        <taxon>Alphaproteobacteria</taxon>
        <taxon>Hyphomicrobiales</taxon>
        <taxon>Nitrobacteraceae</taxon>
        <taxon>Rhodopseudomonas</taxon>
    </lineage>
</organism>
<sequence length="169" mass="17674">MSRIALYPGSFDPVTNGHLDVVRHAVALCDKLVVAIGIHPGKKPLFTTEERLAMVERVFGPVAKAAGCDFGCTTYDNLTVTAAEKVGATLMIRGLRDGSDLDYEMQIAGMNETMAPAIHTVFLPASVGVRPITATLVRQIAAMGGDVSAFVPAEVASALKSKFAAGSPA</sequence>
<comment type="function">
    <text evidence="1">Reversibly transfers an adenylyl group from ATP to 4'-phosphopantetheine, yielding dephospho-CoA (dPCoA) and pyrophosphate.</text>
</comment>
<comment type="catalytic activity">
    <reaction evidence="1">
        <text>(R)-4'-phosphopantetheine + ATP + H(+) = 3'-dephospho-CoA + diphosphate</text>
        <dbReference type="Rhea" id="RHEA:19801"/>
        <dbReference type="ChEBI" id="CHEBI:15378"/>
        <dbReference type="ChEBI" id="CHEBI:30616"/>
        <dbReference type="ChEBI" id="CHEBI:33019"/>
        <dbReference type="ChEBI" id="CHEBI:57328"/>
        <dbReference type="ChEBI" id="CHEBI:61723"/>
        <dbReference type="EC" id="2.7.7.3"/>
    </reaction>
</comment>
<comment type="cofactor">
    <cofactor evidence="1">
        <name>Mg(2+)</name>
        <dbReference type="ChEBI" id="CHEBI:18420"/>
    </cofactor>
</comment>
<comment type="pathway">
    <text evidence="1">Cofactor biosynthesis; coenzyme A biosynthesis; CoA from (R)-pantothenate: step 4/5.</text>
</comment>
<comment type="subunit">
    <text evidence="1">Homohexamer.</text>
</comment>
<comment type="subcellular location">
    <subcellularLocation>
        <location evidence="1">Cytoplasm</location>
    </subcellularLocation>
</comment>
<comment type="similarity">
    <text evidence="1">Belongs to the bacterial CoaD family.</text>
</comment>
<reference key="1">
    <citation type="journal article" date="2004" name="Nat. Biotechnol.">
        <title>Complete genome sequence of the metabolically versatile photosynthetic bacterium Rhodopseudomonas palustris.</title>
        <authorList>
            <person name="Larimer F.W."/>
            <person name="Chain P."/>
            <person name="Hauser L."/>
            <person name="Lamerdin J.E."/>
            <person name="Malfatti S."/>
            <person name="Do L."/>
            <person name="Land M.L."/>
            <person name="Pelletier D.A."/>
            <person name="Beatty J.T."/>
            <person name="Lang A.S."/>
            <person name="Tabita F.R."/>
            <person name="Gibson J.L."/>
            <person name="Hanson T.E."/>
            <person name="Bobst C."/>
            <person name="Torres y Torres J.L."/>
            <person name="Peres C."/>
            <person name="Harrison F.H."/>
            <person name="Gibson J."/>
            <person name="Harwood C.S."/>
        </authorList>
    </citation>
    <scope>NUCLEOTIDE SEQUENCE [LARGE SCALE GENOMIC DNA]</scope>
    <source>
        <strain>ATCC BAA-98 / CGA009</strain>
    </source>
</reference>
<accession>Q6N6L4</accession>
<evidence type="ECO:0000255" key="1">
    <source>
        <dbReference type="HAMAP-Rule" id="MF_00151"/>
    </source>
</evidence>
<protein>
    <recommendedName>
        <fullName evidence="1">Phosphopantetheine adenylyltransferase</fullName>
        <ecNumber evidence="1">2.7.7.3</ecNumber>
    </recommendedName>
    <alternativeName>
        <fullName evidence="1">Dephospho-CoA pyrophosphorylase</fullName>
    </alternativeName>
    <alternativeName>
        <fullName evidence="1">Pantetheine-phosphate adenylyltransferase</fullName>
        <shortName evidence="1">PPAT</shortName>
    </alternativeName>
</protein>